<reference key="1">
    <citation type="journal article" date="1984" name="Cell">
        <title>Genes of the protozoan parasite Babesia bovis that rearrange to produce RNA species with different sequences.</title>
        <authorList>
            <person name="Cowman A.F."/>
            <person name="Bernard O."/>
            <person name="Stewart N."/>
            <person name="Kemp D.J."/>
        </authorList>
    </citation>
    <scope>NUCLEOTIDE SEQUENCE [MRNA]</scope>
</reference>
<name>BAB2_BABBO</name>
<comment type="miscellaneous">
    <text>The sequences of the gene BABR proteins are nearly identical, differing only at their carboxyl ends.</text>
</comment>
<proteinExistence type="evidence at transcript level"/>
<protein>
    <recommendedName>
        <fullName>Gene BABR protein 2</fullName>
    </recommendedName>
</protein>
<accession>P02891</accession>
<dbReference type="EMBL" id="K02833">
    <property type="status" value="NOT_ANNOTATED_CDS"/>
    <property type="molecule type" value="mRNA"/>
</dbReference>
<dbReference type="PIR" id="A03386">
    <property type="entry name" value="VUQB2B"/>
</dbReference>
<dbReference type="SMR" id="P02891"/>
<dbReference type="VEuPathDB" id="PiroplasmaDB:BBOV_I003020"/>
<sequence>MEAQSATETQKNLKTLMELIKTKRPFKSSDFDTLNLDYLSGQSNEELFKLLIDAINGMKENVAKVNEYLTEEGDHSLSGDELLKFVYKELVYDDESEFDKEKLQKLYKTFSEDSNAFATLQSYIQYLQPEENSQRWIQVHEPVKHRRRLNHNPALRVASPTEQSRCPISRRVVWIPSSVLNPQ</sequence>
<organism>
    <name type="scientific">Babesia bovis</name>
    <dbReference type="NCBI Taxonomy" id="5865"/>
    <lineage>
        <taxon>Eukaryota</taxon>
        <taxon>Sar</taxon>
        <taxon>Alveolata</taxon>
        <taxon>Apicomplexa</taxon>
        <taxon>Aconoidasida</taxon>
        <taxon>Piroplasmida</taxon>
        <taxon>Babesiidae</taxon>
        <taxon>Babesia</taxon>
    </lineage>
</organism>
<feature type="chain" id="PRO_0000064791" description="Gene BABR protein 2">
    <location>
        <begin position="1"/>
        <end position="183"/>
    </location>
</feature>